<feature type="chain" id="PRO_0000090741" description="Phosphatidate cytidylyltransferase">
    <location>
        <begin position="1"/>
        <end position="306"/>
    </location>
</feature>
<feature type="transmembrane region" description="Helical" evidence="1">
    <location>
        <begin position="36"/>
        <end position="56"/>
    </location>
</feature>
<feature type="transmembrane region" description="Helical" evidence="1">
    <location>
        <begin position="82"/>
        <end position="102"/>
    </location>
</feature>
<feature type="transmembrane region" description="Helical" evidence="1">
    <location>
        <begin position="103"/>
        <end position="123"/>
    </location>
</feature>
<feature type="transmembrane region" description="Helical" evidence="1">
    <location>
        <begin position="151"/>
        <end position="171"/>
    </location>
</feature>
<feature type="transmembrane region" description="Helical" evidence="1">
    <location>
        <begin position="180"/>
        <end position="200"/>
    </location>
</feature>
<feature type="transmembrane region" description="Helical" evidence="1">
    <location>
        <begin position="218"/>
        <end position="238"/>
    </location>
</feature>
<feature type="transmembrane region" description="Helical" evidence="1">
    <location>
        <begin position="241"/>
        <end position="261"/>
    </location>
</feature>
<feature type="transmembrane region" description="Helical" evidence="1">
    <location>
        <begin position="285"/>
        <end position="305"/>
    </location>
</feature>
<feature type="region of interest" description="Disordered" evidence="2">
    <location>
        <begin position="1"/>
        <end position="28"/>
    </location>
</feature>
<keyword id="KW-1003">Cell membrane</keyword>
<keyword id="KW-0444">Lipid biosynthesis</keyword>
<keyword id="KW-0443">Lipid metabolism</keyword>
<keyword id="KW-0472">Membrane</keyword>
<keyword id="KW-0548">Nucleotidyltransferase</keyword>
<keyword id="KW-0594">Phospholipid biosynthesis</keyword>
<keyword id="KW-1208">Phospholipid metabolism</keyword>
<keyword id="KW-1185">Reference proteome</keyword>
<keyword id="KW-0808">Transferase</keyword>
<keyword id="KW-0812">Transmembrane</keyword>
<keyword id="KW-1133">Transmembrane helix</keyword>
<protein>
    <recommendedName>
        <fullName>Phosphatidate cytidylyltransferase</fullName>
        <ecNumber>2.7.7.41</ecNumber>
    </recommendedName>
    <alternativeName>
        <fullName>CDP-DAG synthase</fullName>
    </alternativeName>
    <alternativeName>
        <fullName>CDP-DG synthase</fullName>
    </alternativeName>
    <alternativeName>
        <fullName>CDP-diacylglycerol synthase</fullName>
        <shortName>CDS</shortName>
    </alternativeName>
    <alternativeName>
        <fullName>CDP-diglyceride pyrophosphorylase</fullName>
    </alternativeName>
    <alternativeName>
        <fullName>CDP-diglyceride synthase</fullName>
    </alternativeName>
    <alternativeName>
        <fullName>CTP:phosphatidate cytidylyltransferase</fullName>
    </alternativeName>
</protein>
<accession>P63759</accession>
<accession>A0A1R3Y398</accession>
<accession>Q10807</accession>
<accession>X2BLT6</accession>
<organism>
    <name type="scientific">Mycobacterium bovis (strain ATCC BAA-935 / AF2122/97)</name>
    <dbReference type="NCBI Taxonomy" id="233413"/>
    <lineage>
        <taxon>Bacteria</taxon>
        <taxon>Bacillati</taxon>
        <taxon>Actinomycetota</taxon>
        <taxon>Actinomycetes</taxon>
        <taxon>Mycobacteriales</taxon>
        <taxon>Mycobacteriaceae</taxon>
        <taxon>Mycobacterium</taxon>
        <taxon>Mycobacterium tuberculosis complex</taxon>
    </lineage>
</organism>
<comment type="catalytic activity">
    <reaction>
        <text>a 1,2-diacyl-sn-glycero-3-phosphate + CTP + H(+) = a CDP-1,2-diacyl-sn-glycerol + diphosphate</text>
        <dbReference type="Rhea" id="RHEA:16229"/>
        <dbReference type="ChEBI" id="CHEBI:15378"/>
        <dbReference type="ChEBI" id="CHEBI:33019"/>
        <dbReference type="ChEBI" id="CHEBI:37563"/>
        <dbReference type="ChEBI" id="CHEBI:58332"/>
        <dbReference type="ChEBI" id="CHEBI:58608"/>
        <dbReference type="EC" id="2.7.7.41"/>
    </reaction>
</comment>
<comment type="pathway">
    <text>Phospholipid metabolism; CDP-diacylglycerol biosynthesis; CDP-diacylglycerol from sn-glycerol 3-phosphate: step 3/3.</text>
</comment>
<comment type="subcellular location">
    <subcellularLocation>
        <location evidence="3">Cell membrane</location>
        <topology evidence="3">Multi-pass membrane protein</topology>
    </subcellularLocation>
</comment>
<comment type="similarity">
    <text evidence="3">Belongs to the CDS family.</text>
</comment>
<reference key="1">
    <citation type="journal article" date="2003" name="Proc. Natl. Acad. Sci. U.S.A.">
        <title>The complete genome sequence of Mycobacterium bovis.</title>
        <authorList>
            <person name="Garnier T."/>
            <person name="Eiglmeier K."/>
            <person name="Camus J.-C."/>
            <person name="Medina N."/>
            <person name="Mansoor H."/>
            <person name="Pryor M."/>
            <person name="Duthoy S."/>
            <person name="Grondin S."/>
            <person name="Lacroix C."/>
            <person name="Monsempe C."/>
            <person name="Simon S."/>
            <person name="Harris B."/>
            <person name="Atkin R."/>
            <person name="Doggett J."/>
            <person name="Mayes R."/>
            <person name="Keating L."/>
            <person name="Wheeler P.R."/>
            <person name="Parkhill J."/>
            <person name="Barrell B.G."/>
            <person name="Cole S.T."/>
            <person name="Gordon S.V."/>
            <person name="Hewinson R.G."/>
        </authorList>
    </citation>
    <scope>NUCLEOTIDE SEQUENCE [LARGE SCALE GENOMIC DNA]</scope>
    <source>
        <strain>ATCC BAA-935 / AF2122/97</strain>
    </source>
</reference>
<reference key="2">
    <citation type="journal article" date="2017" name="Genome Announc.">
        <title>Updated reference genome sequence and annotation of Mycobacterium bovis AF2122/97.</title>
        <authorList>
            <person name="Malone K.M."/>
            <person name="Farrell D."/>
            <person name="Stuber T.P."/>
            <person name="Schubert O.T."/>
            <person name="Aebersold R."/>
            <person name="Robbe-Austerman S."/>
            <person name="Gordon S.V."/>
        </authorList>
    </citation>
    <scope>NUCLEOTIDE SEQUENCE [LARGE SCALE GENOMIC DNA]</scope>
    <scope>GENOME REANNOTATION</scope>
    <source>
        <strain>ATCC BAA-935 / AF2122/97</strain>
    </source>
</reference>
<sequence length="306" mass="32035">MTTNDAGTGNPAEQPARGAKQQPATETSRAGRDLRAAIVVGLSIGLVLIAVLVFVPRVWVAIVAVATLVATHEVVRRLREAGYLIPVIPLLIGGQAAVWLTWPFGAVGALAGFGGMVVVCMIWRLFMQDSVTRPTTGGAPSPGNYLSDVSATVFLAVWVPLFCSFGAMLVYPENGSGWVFCMMIAVIASDVGGYAVGVLFGKHPMVPTISPKKSWEGFAGSLVCGITATIITATFLVGKTPWIGALLGVLFVLTTALGDLVESQVKRDLGIKDMGRLLPGHGGLMDRLDGILPSAVAAWIVLTLLP</sequence>
<evidence type="ECO:0000255" key="1"/>
<evidence type="ECO:0000256" key="2">
    <source>
        <dbReference type="SAM" id="MobiDB-lite"/>
    </source>
</evidence>
<evidence type="ECO:0000305" key="3"/>
<gene>
    <name type="primary">cdsA</name>
    <name type="ordered locus">BQ2027_MB2905C</name>
</gene>
<proteinExistence type="inferred from homology"/>
<dbReference type="EC" id="2.7.7.41"/>
<dbReference type="EMBL" id="LT708304">
    <property type="protein sequence ID" value="SIU01526.1"/>
    <property type="molecule type" value="Genomic_DNA"/>
</dbReference>
<dbReference type="RefSeq" id="NP_856550.1">
    <property type="nucleotide sequence ID" value="NC_002945.3"/>
</dbReference>
<dbReference type="RefSeq" id="WP_003414661.1">
    <property type="nucleotide sequence ID" value="NC_002945.4"/>
</dbReference>
<dbReference type="SMR" id="P63759"/>
<dbReference type="KEGG" id="mbo:BQ2027_MB2905C"/>
<dbReference type="PATRIC" id="fig|233413.5.peg.3188"/>
<dbReference type="UniPathway" id="UPA00557">
    <property type="reaction ID" value="UER00614"/>
</dbReference>
<dbReference type="Proteomes" id="UP000001419">
    <property type="component" value="Chromosome"/>
</dbReference>
<dbReference type="GO" id="GO:0005886">
    <property type="term" value="C:plasma membrane"/>
    <property type="evidence" value="ECO:0007669"/>
    <property type="project" value="UniProtKB-SubCell"/>
</dbReference>
<dbReference type="GO" id="GO:0004605">
    <property type="term" value="F:phosphatidate cytidylyltransferase activity"/>
    <property type="evidence" value="ECO:0007669"/>
    <property type="project" value="UniProtKB-EC"/>
</dbReference>
<dbReference type="GO" id="GO:0016024">
    <property type="term" value="P:CDP-diacylglycerol biosynthetic process"/>
    <property type="evidence" value="ECO:0007669"/>
    <property type="project" value="UniProtKB-UniPathway"/>
</dbReference>
<dbReference type="InterPro" id="IPR000374">
    <property type="entry name" value="PC_trans"/>
</dbReference>
<dbReference type="PANTHER" id="PTHR46382">
    <property type="entry name" value="PHOSPHATIDATE CYTIDYLYLTRANSFERASE"/>
    <property type="match status" value="1"/>
</dbReference>
<dbReference type="PANTHER" id="PTHR46382:SF1">
    <property type="entry name" value="PHOSPHATIDATE CYTIDYLYLTRANSFERASE"/>
    <property type="match status" value="1"/>
</dbReference>
<dbReference type="Pfam" id="PF01148">
    <property type="entry name" value="CTP_transf_1"/>
    <property type="match status" value="1"/>
</dbReference>
<dbReference type="PROSITE" id="PS01315">
    <property type="entry name" value="CDS"/>
    <property type="match status" value="1"/>
</dbReference>
<name>CDSA_MYCBO</name>